<name>RS10_STRPG</name>
<dbReference type="EMBL" id="AM295007">
    <property type="protein sequence ID" value="CAM29385.1"/>
    <property type="molecule type" value="Genomic_DNA"/>
</dbReference>
<dbReference type="RefSeq" id="WP_001284518.1">
    <property type="nucleotide sequence ID" value="NC_009332.1"/>
</dbReference>
<dbReference type="SMR" id="A2RC13"/>
<dbReference type="GeneID" id="69900025"/>
<dbReference type="KEGG" id="spf:SpyM50043"/>
<dbReference type="HOGENOM" id="CLU_122625_1_3_9"/>
<dbReference type="GO" id="GO:1990904">
    <property type="term" value="C:ribonucleoprotein complex"/>
    <property type="evidence" value="ECO:0007669"/>
    <property type="project" value="UniProtKB-KW"/>
</dbReference>
<dbReference type="GO" id="GO:0005840">
    <property type="term" value="C:ribosome"/>
    <property type="evidence" value="ECO:0007669"/>
    <property type="project" value="UniProtKB-KW"/>
</dbReference>
<dbReference type="GO" id="GO:0003735">
    <property type="term" value="F:structural constituent of ribosome"/>
    <property type="evidence" value="ECO:0007669"/>
    <property type="project" value="InterPro"/>
</dbReference>
<dbReference type="GO" id="GO:0000049">
    <property type="term" value="F:tRNA binding"/>
    <property type="evidence" value="ECO:0007669"/>
    <property type="project" value="UniProtKB-UniRule"/>
</dbReference>
<dbReference type="GO" id="GO:0006412">
    <property type="term" value="P:translation"/>
    <property type="evidence" value="ECO:0007669"/>
    <property type="project" value="UniProtKB-UniRule"/>
</dbReference>
<dbReference type="FunFam" id="3.30.70.600:FF:000001">
    <property type="entry name" value="30S ribosomal protein S10"/>
    <property type="match status" value="1"/>
</dbReference>
<dbReference type="Gene3D" id="3.30.70.600">
    <property type="entry name" value="Ribosomal protein S10 domain"/>
    <property type="match status" value="1"/>
</dbReference>
<dbReference type="HAMAP" id="MF_00508">
    <property type="entry name" value="Ribosomal_uS10"/>
    <property type="match status" value="1"/>
</dbReference>
<dbReference type="InterPro" id="IPR001848">
    <property type="entry name" value="Ribosomal_uS10"/>
</dbReference>
<dbReference type="InterPro" id="IPR018268">
    <property type="entry name" value="Ribosomal_uS10_CS"/>
</dbReference>
<dbReference type="InterPro" id="IPR027486">
    <property type="entry name" value="Ribosomal_uS10_dom"/>
</dbReference>
<dbReference type="InterPro" id="IPR036838">
    <property type="entry name" value="Ribosomal_uS10_dom_sf"/>
</dbReference>
<dbReference type="NCBIfam" id="NF001861">
    <property type="entry name" value="PRK00596.1"/>
    <property type="match status" value="1"/>
</dbReference>
<dbReference type="NCBIfam" id="TIGR01049">
    <property type="entry name" value="rpsJ_bact"/>
    <property type="match status" value="1"/>
</dbReference>
<dbReference type="PANTHER" id="PTHR11700">
    <property type="entry name" value="30S RIBOSOMAL PROTEIN S10 FAMILY MEMBER"/>
    <property type="match status" value="1"/>
</dbReference>
<dbReference type="Pfam" id="PF00338">
    <property type="entry name" value="Ribosomal_S10"/>
    <property type="match status" value="1"/>
</dbReference>
<dbReference type="PRINTS" id="PR00971">
    <property type="entry name" value="RIBOSOMALS10"/>
</dbReference>
<dbReference type="SMART" id="SM01403">
    <property type="entry name" value="Ribosomal_S10"/>
    <property type="match status" value="1"/>
</dbReference>
<dbReference type="SUPFAM" id="SSF54999">
    <property type="entry name" value="Ribosomal protein S10"/>
    <property type="match status" value="1"/>
</dbReference>
<dbReference type="PROSITE" id="PS00361">
    <property type="entry name" value="RIBOSOMAL_S10"/>
    <property type="match status" value="1"/>
</dbReference>
<sequence>MANKKIRIRLKAYEHRTLDTAAEKIVETATRTGATVAGPVPLPTERSLYTIIRATHKYKDSREQFEMRTHKRLVDIINPTQKTVDALMKLDLPSGVNVEIKL</sequence>
<feature type="chain" id="PRO_1000015122" description="Small ribosomal subunit protein uS10">
    <location>
        <begin position="1"/>
        <end position="102"/>
    </location>
</feature>
<evidence type="ECO:0000255" key="1">
    <source>
        <dbReference type="HAMAP-Rule" id="MF_00508"/>
    </source>
</evidence>
<evidence type="ECO:0000305" key="2"/>
<protein>
    <recommendedName>
        <fullName evidence="1">Small ribosomal subunit protein uS10</fullName>
    </recommendedName>
    <alternativeName>
        <fullName evidence="2">30S ribosomal protein S10</fullName>
    </alternativeName>
</protein>
<comment type="function">
    <text evidence="1">Involved in the binding of tRNA to the ribosomes.</text>
</comment>
<comment type="subunit">
    <text evidence="1">Part of the 30S ribosomal subunit.</text>
</comment>
<comment type="similarity">
    <text evidence="1">Belongs to the universal ribosomal protein uS10 family.</text>
</comment>
<proteinExistence type="inferred from homology"/>
<organism>
    <name type="scientific">Streptococcus pyogenes serotype M5 (strain Manfredo)</name>
    <dbReference type="NCBI Taxonomy" id="160491"/>
    <lineage>
        <taxon>Bacteria</taxon>
        <taxon>Bacillati</taxon>
        <taxon>Bacillota</taxon>
        <taxon>Bacilli</taxon>
        <taxon>Lactobacillales</taxon>
        <taxon>Streptococcaceae</taxon>
        <taxon>Streptococcus</taxon>
    </lineage>
</organism>
<gene>
    <name evidence="1" type="primary">rpsJ</name>
    <name type="ordered locus">SpyM50043</name>
</gene>
<accession>A2RC13</accession>
<keyword id="KW-0687">Ribonucleoprotein</keyword>
<keyword id="KW-0689">Ribosomal protein</keyword>
<reference key="1">
    <citation type="journal article" date="2007" name="J. Bacteriol.">
        <title>Complete genome of acute rheumatic fever-associated serotype M5 Streptococcus pyogenes strain Manfredo.</title>
        <authorList>
            <person name="Holden M.T.G."/>
            <person name="Scott A."/>
            <person name="Cherevach I."/>
            <person name="Chillingworth T."/>
            <person name="Churcher C."/>
            <person name="Cronin A."/>
            <person name="Dowd L."/>
            <person name="Feltwell T."/>
            <person name="Hamlin N."/>
            <person name="Holroyd S."/>
            <person name="Jagels K."/>
            <person name="Moule S."/>
            <person name="Mungall K."/>
            <person name="Quail M.A."/>
            <person name="Price C."/>
            <person name="Rabbinowitsch E."/>
            <person name="Sharp S."/>
            <person name="Skelton J."/>
            <person name="Whitehead S."/>
            <person name="Barrell B.G."/>
            <person name="Kehoe M."/>
            <person name="Parkhill J."/>
        </authorList>
    </citation>
    <scope>NUCLEOTIDE SEQUENCE [LARGE SCALE GENOMIC DNA]</scope>
    <source>
        <strain>Manfredo</strain>
    </source>
</reference>